<feature type="chain" id="PRO_1000058729" description="Putative competence-damage inducible protein">
    <location>
        <begin position="1"/>
        <end position="419"/>
    </location>
</feature>
<reference key="1">
    <citation type="journal article" date="2005" name="Proc. Natl. Acad. Sci. U.S.A.">
        <title>Genome analysis of multiple pathogenic isolates of Streptococcus agalactiae: implications for the microbial 'pan-genome'.</title>
        <authorList>
            <person name="Tettelin H."/>
            <person name="Masignani V."/>
            <person name="Cieslewicz M.J."/>
            <person name="Donati C."/>
            <person name="Medini D."/>
            <person name="Ward N.L."/>
            <person name="Angiuoli S.V."/>
            <person name="Crabtree J."/>
            <person name="Jones A.L."/>
            <person name="Durkin A.S."/>
            <person name="DeBoy R.T."/>
            <person name="Davidsen T.M."/>
            <person name="Mora M."/>
            <person name="Scarselli M."/>
            <person name="Margarit y Ros I."/>
            <person name="Peterson J.D."/>
            <person name="Hauser C.R."/>
            <person name="Sundaram J.P."/>
            <person name="Nelson W.C."/>
            <person name="Madupu R."/>
            <person name="Brinkac L.M."/>
            <person name="Dodson R.J."/>
            <person name="Rosovitz M.J."/>
            <person name="Sullivan S.A."/>
            <person name="Daugherty S.C."/>
            <person name="Haft D.H."/>
            <person name="Selengut J."/>
            <person name="Gwinn M.L."/>
            <person name="Zhou L."/>
            <person name="Zafar N."/>
            <person name="Khouri H."/>
            <person name="Radune D."/>
            <person name="Dimitrov G."/>
            <person name="Watkins K."/>
            <person name="O'Connor K.J."/>
            <person name="Smith S."/>
            <person name="Utterback T.R."/>
            <person name="White O."/>
            <person name="Rubens C.E."/>
            <person name="Grandi G."/>
            <person name="Madoff L.C."/>
            <person name="Kasper D.L."/>
            <person name="Telford J.L."/>
            <person name="Wessels M.R."/>
            <person name="Rappuoli R."/>
            <person name="Fraser C.M."/>
        </authorList>
    </citation>
    <scope>NUCLEOTIDE SEQUENCE [LARGE SCALE GENOMIC DNA]</scope>
    <source>
        <strain>ATCC 27591 / A909 / CDC SS700</strain>
    </source>
</reference>
<accession>Q3JYN0</accession>
<name>CINA_STRA1</name>
<sequence length="419" mass="45454">MRAEIIAVGTEILTGQIVNTNAQFLSEKMAELGIDIYFQTAVGDNEERLLSLLDIASQRSQLVILCGGLGPTEDDLTKQTLAKFLGKSLTVDLLASQKLDRFFASRPQFARTPNNERQAQLVEGSIPLQNLTGLAVGGIVTSKGVQYMVLPGPPSELNPMVMEQVVPILSNNGTKLYSRVLRFFGIGESQLVTILEDIIKNQTDPTIAPYAKVGEVTLRLSTKAENQDEADFKLDSLEKEILALKTLDNRKLKDLLYGYGDNNSMARTVLELLKVQNKTITAAESLTAGLFQSQLAEFSGASQVFNGGFTTYSMEAKSQLLGIPKKKLQEYGVISHFTAEAMAQQARQLLKADFGIGLTGVAGPDELEGYPAGTVFIGIATPEGVSSIKVSIGGKSRSDVRHISTLHAFDLVRRALLKI</sequence>
<comment type="similarity">
    <text evidence="1">Belongs to the CinA family.</text>
</comment>
<evidence type="ECO:0000255" key="1">
    <source>
        <dbReference type="HAMAP-Rule" id="MF_00226"/>
    </source>
</evidence>
<protein>
    <recommendedName>
        <fullName evidence="1">Putative competence-damage inducible protein</fullName>
    </recommendedName>
</protein>
<dbReference type="EMBL" id="CP000114">
    <property type="protein sequence ID" value="ABA45844.1"/>
    <property type="molecule type" value="Genomic_DNA"/>
</dbReference>
<dbReference type="RefSeq" id="WP_001200975.1">
    <property type="nucleotide sequence ID" value="NC_007432.1"/>
</dbReference>
<dbReference type="SMR" id="Q3JYN0"/>
<dbReference type="KEGG" id="sak:SAK_2033"/>
<dbReference type="HOGENOM" id="CLU_030805_9_3_9"/>
<dbReference type="CDD" id="cd00885">
    <property type="entry name" value="cinA"/>
    <property type="match status" value="1"/>
</dbReference>
<dbReference type="Gene3D" id="3.30.70.2860">
    <property type="match status" value="1"/>
</dbReference>
<dbReference type="Gene3D" id="3.90.950.20">
    <property type="entry name" value="CinA-like"/>
    <property type="match status" value="1"/>
</dbReference>
<dbReference type="Gene3D" id="3.40.980.10">
    <property type="entry name" value="MoaB/Mog-like domain"/>
    <property type="match status" value="1"/>
</dbReference>
<dbReference type="HAMAP" id="MF_00226_B">
    <property type="entry name" value="CinA_B"/>
    <property type="match status" value="1"/>
</dbReference>
<dbReference type="InterPro" id="IPR050101">
    <property type="entry name" value="CinA"/>
</dbReference>
<dbReference type="InterPro" id="IPR036653">
    <property type="entry name" value="CinA-like_C"/>
</dbReference>
<dbReference type="InterPro" id="IPR008136">
    <property type="entry name" value="CinA_C"/>
</dbReference>
<dbReference type="InterPro" id="IPR041424">
    <property type="entry name" value="CinA_KH"/>
</dbReference>
<dbReference type="InterPro" id="IPR008135">
    <property type="entry name" value="Competence-induced_CinA"/>
</dbReference>
<dbReference type="InterPro" id="IPR036425">
    <property type="entry name" value="MoaB/Mog-like_dom_sf"/>
</dbReference>
<dbReference type="InterPro" id="IPR001453">
    <property type="entry name" value="MoaB/Mog_dom"/>
</dbReference>
<dbReference type="NCBIfam" id="TIGR00200">
    <property type="entry name" value="cinA_nterm"/>
    <property type="match status" value="1"/>
</dbReference>
<dbReference type="NCBIfam" id="TIGR00199">
    <property type="entry name" value="PncC_domain"/>
    <property type="match status" value="1"/>
</dbReference>
<dbReference type="NCBIfam" id="NF001813">
    <property type="entry name" value="PRK00549.1"/>
    <property type="match status" value="1"/>
</dbReference>
<dbReference type="PANTHER" id="PTHR13939">
    <property type="entry name" value="NICOTINAMIDE-NUCLEOTIDE AMIDOHYDROLASE PNCC"/>
    <property type="match status" value="1"/>
</dbReference>
<dbReference type="PANTHER" id="PTHR13939:SF0">
    <property type="entry name" value="NMN AMIDOHYDROLASE-LIKE PROTEIN YFAY"/>
    <property type="match status" value="1"/>
</dbReference>
<dbReference type="Pfam" id="PF02464">
    <property type="entry name" value="CinA"/>
    <property type="match status" value="1"/>
</dbReference>
<dbReference type="Pfam" id="PF18146">
    <property type="entry name" value="CinA_KH"/>
    <property type="match status" value="1"/>
</dbReference>
<dbReference type="Pfam" id="PF00994">
    <property type="entry name" value="MoCF_biosynth"/>
    <property type="match status" value="1"/>
</dbReference>
<dbReference type="PIRSF" id="PIRSF006728">
    <property type="entry name" value="CinA"/>
    <property type="match status" value="1"/>
</dbReference>
<dbReference type="SMART" id="SM00852">
    <property type="entry name" value="MoCF_biosynth"/>
    <property type="match status" value="1"/>
</dbReference>
<dbReference type="SUPFAM" id="SSF142433">
    <property type="entry name" value="CinA-like"/>
    <property type="match status" value="1"/>
</dbReference>
<dbReference type="SUPFAM" id="SSF53218">
    <property type="entry name" value="Molybdenum cofactor biosynthesis proteins"/>
    <property type="match status" value="1"/>
</dbReference>
<gene>
    <name evidence="1" type="primary">cinA</name>
    <name type="ordered locus">SAK_2033</name>
</gene>
<proteinExistence type="inferred from homology"/>
<organism>
    <name type="scientific">Streptococcus agalactiae serotype Ia (strain ATCC 27591 / A909 / CDC SS700)</name>
    <dbReference type="NCBI Taxonomy" id="205921"/>
    <lineage>
        <taxon>Bacteria</taxon>
        <taxon>Bacillati</taxon>
        <taxon>Bacillota</taxon>
        <taxon>Bacilli</taxon>
        <taxon>Lactobacillales</taxon>
        <taxon>Streptococcaceae</taxon>
        <taxon>Streptococcus</taxon>
    </lineage>
</organism>